<keyword id="KW-0066">ATP synthesis</keyword>
<keyword id="KW-0067">ATP-binding</keyword>
<keyword id="KW-1003">Cell membrane</keyword>
<keyword id="KW-0375">Hydrogen ion transport</keyword>
<keyword id="KW-0406">Ion transport</keyword>
<keyword id="KW-0472">Membrane</keyword>
<keyword id="KW-0547">Nucleotide-binding</keyword>
<keyword id="KW-1185">Reference proteome</keyword>
<keyword id="KW-1278">Translocase</keyword>
<keyword id="KW-0813">Transport</keyword>
<name>AATA2_METHJ</name>
<organism>
    <name type="scientific">Methanospirillum hungatei JF-1 (strain ATCC 27890 / DSM 864 / NBRC 100397 / JF-1)</name>
    <dbReference type="NCBI Taxonomy" id="323259"/>
    <lineage>
        <taxon>Archaea</taxon>
        <taxon>Methanobacteriati</taxon>
        <taxon>Methanobacteriota</taxon>
        <taxon>Stenosarchaea group</taxon>
        <taxon>Methanomicrobia</taxon>
        <taxon>Methanomicrobiales</taxon>
        <taxon>Methanospirillaceae</taxon>
        <taxon>Methanospirillum</taxon>
    </lineage>
</organism>
<gene>
    <name evidence="1" type="primary">atpA2</name>
    <name type="ordered locus">Mhun_1759</name>
</gene>
<dbReference type="EC" id="7.1.2.2" evidence="1"/>
<dbReference type="EMBL" id="CP000254">
    <property type="protein sequence ID" value="ABD41480.1"/>
    <property type="molecule type" value="Genomic_DNA"/>
</dbReference>
<dbReference type="RefSeq" id="WP_011448744.1">
    <property type="nucleotide sequence ID" value="NC_007796.1"/>
</dbReference>
<dbReference type="SMR" id="Q2FL43"/>
<dbReference type="STRING" id="323259.Mhun_1759"/>
<dbReference type="EnsemblBacteria" id="ABD41480">
    <property type="protein sequence ID" value="ABD41480"/>
    <property type="gene ID" value="Mhun_1759"/>
</dbReference>
<dbReference type="GeneID" id="3924709"/>
<dbReference type="KEGG" id="mhu:Mhun_1759"/>
<dbReference type="eggNOG" id="arCOG00868">
    <property type="taxonomic scope" value="Archaea"/>
</dbReference>
<dbReference type="HOGENOM" id="CLU_008162_3_1_2"/>
<dbReference type="InParanoid" id="Q2FL43"/>
<dbReference type="OrthoDB" id="115235at2157"/>
<dbReference type="Proteomes" id="UP000001941">
    <property type="component" value="Chromosome"/>
</dbReference>
<dbReference type="GO" id="GO:0005886">
    <property type="term" value="C:plasma membrane"/>
    <property type="evidence" value="ECO:0007669"/>
    <property type="project" value="UniProtKB-SubCell"/>
</dbReference>
<dbReference type="GO" id="GO:0005524">
    <property type="term" value="F:ATP binding"/>
    <property type="evidence" value="ECO:0007669"/>
    <property type="project" value="UniProtKB-UniRule"/>
</dbReference>
<dbReference type="GO" id="GO:0046933">
    <property type="term" value="F:proton-transporting ATP synthase activity, rotational mechanism"/>
    <property type="evidence" value="ECO:0007669"/>
    <property type="project" value="UniProtKB-UniRule"/>
</dbReference>
<dbReference type="GO" id="GO:0046961">
    <property type="term" value="F:proton-transporting ATPase activity, rotational mechanism"/>
    <property type="evidence" value="ECO:0007669"/>
    <property type="project" value="InterPro"/>
</dbReference>
<dbReference type="GO" id="GO:0042777">
    <property type="term" value="P:proton motive force-driven plasma membrane ATP synthesis"/>
    <property type="evidence" value="ECO:0007669"/>
    <property type="project" value="UniProtKB-UniRule"/>
</dbReference>
<dbReference type="CDD" id="cd18111">
    <property type="entry name" value="ATP-synt_V_A-type_alpha_C"/>
    <property type="match status" value="1"/>
</dbReference>
<dbReference type="CDD" id="cd18119">
    <property type="entry name" value="ATP-synt_V_A-type_alpha_N"/>
    <property type="match status" value="1"/>
</dbReference>
<dbReference type="CDD" id="cd01134">
    <property type="entry name" value="V_A-ATPase_A"/>
    <property type="match status" value="1"/>
</dbReference>
<dbReference type="FunFam" id="1.10.1140.10:FF:000002">
    <property type="entry name" value="V-type proton ATPase catalytic subunit A"/>
    <property type="match status" value="1"/>
</dbReference>
<dbReference type="FunFam" id="2.40.30.20:FF:000002">
    <property type="entry name" value="V-type proton ATPase catalytic subunit A"/>
    <property type="match status" value="1"/>
</dbReference>
<dbReference type="Gene3D" id="2.40.30.20">
    <property type="match status" value="1"/>
</dbReference>
<dbReference type="Gene3D" id="2.40.50.100">
    <property type="match status" value="1"/>
</dbReference>
<dbReference type="Gene3D" id="1.10.1140.10">
    <property type="entry name" value="Bovine Mitochondrial F1-atpase, Atp Synthase Beta Chain, Chain D, domain 3"/>
    <property type="match status" value="1"/>
</dbReference>
<dbReference type="Gene3D" id="3.40.50.300">
    <property type="entry name" value="P-loop containing nucleotide triphosphate hydrolases"/>
    <property type="match status" value="1"/>
</dbReference>
<dbReference type="HAMAP" id="MF_00309">
    <property type="entry name" value="ATP_synth_A_arch"/>
    <property type="match status" value="1"/>
</dbReference>
<dbReference type="InterPro" id="IPR055190">
    <property type="entry name" value="ATP-synt_VA_C"/>
</dbReference>
<dbReference type="InterPro" id="IPR031686">
    <property type="entry name" value="ATP-synth_a_Xtn"/>
</dbReference>
<dbReference type="InterPro" id="IPR023366">
    <property type="entry name" value="ATP_synth_asu-like_sf"/>
</dbReference>
<dbReference type="InterPro" id="IPR020003">
    <property type="entry name" value="ATPase_a/bsu_AS"/>
</dbReference>
<dbReference type="InterPro" id="IPR004100">
    <property type="entry name" value="ATPase_F1/V1/A1_a/bsu_N"/>
</dbReference>
<dbReference type="InterPro" id="IPR036121">
    <property type="entry name" value="ATPase_F1/V1/A1_a/bsu_N_sf"/>
</dbReference>
<dbReference type="InterPro" id="IPR000194">
    <property type="entry name" value="ATPase_F1/V1/A1_a/bsu_nucl-bd"/>
</dbReference>
<dbReference type="InterPro" id="IPR024034">
    <property type="entry name" value="ATPase_F1/V1_b/a_C"/>
</dbReference>
<dbReference type="InterPro" id="IPR027417">
    <property type="entry name" value="P-loop_NTPase"/>
</dbReference>
<dbReference type="InterPro" id="IPR022878">
    <property type="entry name" value="V-ATPase_asu"/>
</dbReference>
<dbReference type="NCBIfam" id="NF003220">
    <property type="entry name" value="PRK04192.1"/>
    <property type="match status" value="1"/>
</dbReference>
<dbReference type="PANTHER" id="PTHR43607:SF1">
    <property type="entry name" value="H(+)-TRANSPORTING TWO-SECTOR ATPASE"/>
    <property type="match status" value="1"/>
</dbReference>
<dbReference type="PANTHER" id="PTHR43607">
    <property type="entry name" value="V-TYPE PROTON ATPASE CATALYTIC SUBUNIT A"/>
    <property type="match status" value="1"/>
</dbReference>
<dbReference type="Pfam" id="PF00006">
    <property type="entry name" value="ATP-synt_ab"/>
    <property type="match status" value="1"/>
</dbReference>
<dbReference type="Pfam" id="PF02874">
    <property type="entry name" value="ATP-synt_ab_N"/>
    <property type="match status" value="1"/>
</dbReference>
<dbReference type="Pfam" id="PF16886">
    <property type="entry name" value="ATP-synt_ab_Xtn"/>
    <property type="match status" value="1"/>
</dbReference>
<dbReference type="Pfam" id="PF22919">
    <property type="entry name" value="ATP-synt_VA_C"/>
    <property type="match status" value="1"/>
</dbReference>
<dbReference type="SUPFAM" id="SSF47917">
    <property type="entry name" value="C-terminal domain of alpha and beta subunits of F1 ATP synthase"/>
    <property type="match status" value="1"/>
</dbReference>
<dbReference type="SUPFAM" id="SSF50615">
    <property type="entry name" value="N-terminal domain of alpha and beta subunits of F1 ATP synthase"/>
    <property type="match status" value="1"/>
</dbReference>
<dbReference type="SUPFAM" id="SSF52540">
    <property type="entry name" value="P-loop containing nucleoside triphosphate hydrolases"/>
    <property type="match status" value="1"/>
</dbReference>
<dbReference type="PROSITE" id="PS00152">
    <property type="entry name" value="ATPASE_ALPHA_BETA"/>
    <property type="match status" value="1"/>
</dbReference>
<feature type="chain" id="PRO_0000322483" description="A-type ATP synthase subunit A 2">
    <location>
        <begin position="1"/>
        <end position="584"/>
    </location>
</feature>
<feature type="binding site" evidence="1">
    <location>
        <begin position="227"/>
        <end position="234"/>
    </location>
    <ligand>
        <name>ATP</name>
        <dbReference type="ChEBI" id="CHEBI:30616"/>
    </ligand>
</feature>
<evidence type="ECO:0000255" key="1">
    <source>
        <dbReference type="HAMAP-Rule" id="MF_00309"/>
    </source>
</evidence>
<accession>Q2FL43</accession>
<proteinExistence type="inferred from homology"/>
<comment type="function">
    <text evidence="1">Component of the A-type ATP synthase that produces ATP from ADP in the presence of a proton gradient across the membrane. The A chain is the catalytic subunit.</text>
</comment>
<comment type="catalytic activity">
    <reaction evidence="1">
        <text>ATP + H2O + 4 H(+)(in) = ADP + phosphate + 5 H(+)(out)</text>
        <dbReference type="Rhea" id="RHEA:57720"/>
        <dbReference type="ChEBI" id="CHEBI:15377"/>
        <dbReference type="ChEBI" id="CHEBI:15378"/>
        <dbReference type="ChEBI" id="CHEBI:30616"/>
        <dbReference type="ChEBI" id="CHEBI:43474"/>
        <dbReference type="ChEBI" id="CHEBI:456216"/>
        <dbReference type="EC" id="7.1.2.2"/>
    </reaction>
</comment>
<comment type="subunit">
    <text evidence="1">Has multiple subunits with at least A(3), B(3), C, D, E, F, H, I and proteolipid K(x).</text>
</comment>
<comment type="subcellular location">
    <subcellularLocation>
        <location evidence="1">Cell membrane</location>
        <topology evidence="1">Peripheral membrane protein</topology>
    </subcellularLocation>
</comment>
<comment type="similarity">
    <text evidence="1">Belongs to the ATPase alpha/beta chains family.</text>
</comment>
<reference key="1">
    <citation type="journal article" date="2016" name="Stand. Genomic Sci.">
        <title>Complete genome sequence of Methanospirillum hungatei type strain JF1.</title>
        <authorList>
            <person name="Gunsalus R.P."/>
            <person name="Cook L.E."/>
            <person name="Crable B."/>
            <person name="Rohlin L."/>
            <person name="McDonald E."/>
            <person name="Mouttaki H."/>
            <person name="Sieber J.R."/>
            <person name="Poweleit N."/>
            <person name="Zhou H."/>
            <person name="Lapidus A.L."/>
            <person name="Daligault H.E."/>
            <person name="Land M."/>
            <person name="Gilna P."/>
            <person name="Ivanova N."/>
            <person name="Kyrpides N."/>
            <person name="Culley D.E."/>
            <person name="McInerney M.J."/>
        </authorList>
    </citation>
    <scope>NUCLEOTIDE SEQUENCE [LARGE SCALE GENOMIC DNA]</scope>
    <source>
        <strain>ATCC 27890 / DSM 864 / NBRC 100397 / JF-1</strain>
    </source>
</reference>
<sequence>MITGTIARISGPVITARNMTGSRMYDVVWVGRAALPGEIIRLEGDEAVIQVYEDTTGLMIHEPVENTGVPLSVELGPGLLASIYDGVQRPLPALYAKSGNYISRGIMVPGLDREKRWAFNPVKKAGEMVQTGDVLGTVQEFHLVHSIMVPPGVSGEIKTIASGEFTVTDVVCTLADGTEITMLQRWPVRKGRPFVKRLDPEVPLLTGQRVFDTMFPLVKGGTAMIPGGFGTGKTVSEQTLAKWADTQVVVYIGCGERGNEMTDVLTEFPELTDPRTGYPLIERTIMIANTSNMPVAAREASIYTGITIAEYYRDMGMDVALLADSTSRWGEALREVSGRLEEMPGEEGYPAYLATRLAAFYERAGRVICAGSEEKTGSVTIIGAVSPPGGDFSEPITQNTLRIAGTFWALDANLAYRRHYPSVNWIRSYSLYLEDVEDWFSEKVARDWYQFRGRAMYILQKEVELQEIVQLVGPDALPDKEKVVLEIAKIIREDFLQQSAYSDDDSFCPLEKQYWMLKIIIWYYDAIRAAMRRNVPLRQLLSIPARSEIARMKEQRDLDRLKRLSDIVWEQTENLEVQTCSTAA</sequence>
<protein>
    <recommendedName>
        <fullName evidence="1">A-type ATP synthase subunit A 2</fullName>
        <ecNumber evidence="1">7.1.2.2</ecNumber>
    </recommendedName>
</protein>